<reference key="1">
    <citation type="submission" date="2007-06" db="EMBL/GenBank/DDBJ databases">
        <authorList>
            <consortium name="NIH - Mammalian Gene Collection (MGC) project"/>
        </authorList>
    </citation>
    <scope>NUCLEOTIDE SEQUENCE [LARGE SCALE MRNA]</scope>
    <source>
        <strain>Hereford</strain>
        <tissue>Fetal pancreas</tissue>
    </source>
</reference>
<keyword id="KW-0256">Endoplasmic reticulum</keyword>
<keyword id="KW-0325">Glycoprotein</keyword>
<keyword id="KW-0328">Glycosyltransferase</keyword>
<keyword id="KW-1185">Reference proteome</keyword>
<keyword id="KW-0732">Signal</keyword>
<keyword id="KW-0808">Transferase</keyword>
<accession>A5PK45</accession>
<sequence length="623" mass="71547">MAAAPRACKGHGRPLPVLLLLLLLALPPLGGPPGAAAYFPEERWSPESPLQAPRVLIALLARNAAHALPATLGALERLRHPRERTALWVATDHNADNTSAVLREWLVAVKGLYHSVEWRPSEEPRSYPDEEGPKHWSDSRYEHVMKLRQAALKSARDMWADYILFVDADNLILNPDTLTLLIAENKTVVAPMLDSRAAYSNFWCGMTSQGYYKRTPAYIPIRKRERRGCFAVPMVHSTFLIDLRKAASRNLAFYPPHPDYTWSFDDIIVFAFSCKQAEVQMYVCNKEVYGFLPVPLRSHSTLQDEAESFMHVQLEVMVKHPPSEPSRFISVPTKTPDKMGFDEVFMINLKRRQDRRERMLRALEEQEIACRLVEAVDGKAMNTSQVEALGIQMLPGYRDPYHGRPLTKGELGCFLSHYNIWKEVVDRGLQKSLVFEDDLRFEIFFKRRLMNLMQDVEREGLDWDLIYVGRKRMQVEHPEKAVPRVRNLVEADYSYWTLAYVISLQGARKLLAARPLSKMLPVDEFLPVMFDKHPVSEYKAHFSPRDLRAFSVEPLLIYPTHYTGDDGYVSDTETSVVWNNEHVKTDWDRAKSQKMREQQALSREAKNSDVLQSPLDSAARDEL</sequence>
<organism>
    <name type="scientific">Bos taurus</name>
    <name type="common">Bovine</name>
    <dbReference type="NCBI Taxonomy" id="9913"/>
    <lineage>
        <taxon>Eukaryota</taxon>
        <taxon>Metazoa</taxon>
        <taxon>Chordata</taxon>
        <taxon>Craniata</taxon>
        <taxon>Vertebrata</taxon>
        <taxon>Euteleostomi</taxon>
        <taxon>Mammalia</taxon>
        <taxon>Eutheria</taxon>
        <taxon>Laurasiatheria</taxon>
        <taxon>Artiodactyla</taxon>
        <taxon>Ruminantia</taxon>
        <taxon>Pecora</taxon>
        <taxon>Bovidae</taxon>
        <taxon>Bovinae</taxon>
        <taxon>Bos</taxon>
    </lineage>
</organism>
<name>GT251_BOVIN</name>
<gene>
    <name type="primary">COLGALT1</name>
    <name type="synonym">GLT25D1</name>
</gene>
<feature type="signal peptide" evidence="2">
    <location>
        <begin position="1"/>
        <end position="30"/>
    </location>
</feature>
<feature type="chain" id="PRO_0000309535" description="Procollagen galactosyltransferase 1">
    <location>
        <begin position="31"/>
        <end position="623"/>
    </location>
</feature>
<feature type="region of interest" description="Disordered" evidence="4">
    <location>
        <begin position="589"/>
        <end position="623"/>
    </location>
</feature>
<feature type="short sequence motif" description="Prevents secretion from ER" evidence="3">
    <location>
        <begin position="620"/>
        <end position="623"/>
    </location>
</feature>
<feature type="compositionally biased region" description="Basic and acidic residues" evidence="4">
    <location>
        <begin position="589"/>
        <end position="607"/>
    </location>
</feature>
<feature type="glycosylation site" description="N-linked (GlcNAc...) asparagine" evidence="2">
    <location>
        <position position="97"/>
    </location>
</feature>
<feature type="glycosylation site" description="N-linked (GlcNAc...) asparagine" evidence="2">
    <location>
        <position position="185"/>
    </location>
</feature>
<feature type="glycosylation site" description="N-linked (GlcNAc...) asparagine" evidence="2">
    <location>
        <position position="382"/>
    </location>
</feature>
<dbReference type="EC" id="2.4.1.50" evidence="1"/>
<dbReference type="EMBL" id="BC142350">
    <property type="protein sequence ID" value="AAI42351.1"/>
    <property type="molecule type" value="mRNA"/>
</dbReference>
<dbReference type="RefSeq" id="NP_001092425.1">
    <property type="nucleotide sequence ID" value="NM_001098955.1"/>
</dbReference>
<dbReference type="SMR" id="A5PK45"/>
<dbReference type="FunCoup" id="A5PK45">
    <property type="interactions" value="1698"/>
</dbReference>
<dbReference type="STRING" id="9913.ENSBTAP00000016841"/>
<dbReference type="CAZy" id="GT25">
    <property type="family name" value="Glycosyltransferase Family 25"/>
</dbReference>
<dbReference type="GlyCosmos" id="A5PK45">
    <property type="glycosylation" value="3 sites, No reported glycans"/>
</dbReference>
<dbReference type="GlyGen" id="A5PK45">
    <property type="glycosylation" value="3 sites"/>
</dbReference>
<dbReference type="PaxDb" id="9913-ENSBTAP00000016841"/>
<dbReference type="Ensembl" id="ENSBTAT00000016841.6">
    <property type="protein sequence ID" value="ENSBTAP00000016841.4"/>
    <property type="gene ID" value="ENSBTAG00000012678.6"/>
</dbReference>
<dbReference type="GeneID" id="513167"/>
<dbReference type="KEGG" id="bta:513167"/>
<dbReference type="CTD" id="79709"/>
<dbReference type="VEuPathDB" id="HostDB:ENSBTAG00000012678"/>
<dbReference type="VGNC" id="VGNC:53572">
    <property type="gene designation" value="COLGALT1"/>
</dbReference>
<dbReference type="eggNOG" id="KOG4179">
    <property type="taxonomic scope" value="Eukaryota"/>
</dbReference>
<dbReference type="GeneTree" id="ENSGT01030000234558"/>
<dbReference type="HOGENOM" id="CLU_024037_2_0_1"/>
<dbReference type="InParanoid" id="A5PK45"/>
<dbReference type="OMA" id="VVWNNEQ"/>
<dbReference type="OrthoDB" id="47375at2759"/>
<dbReference type="TreeFam" id="TF313826"/>
<dbReference type="Reactome" id="R-BTA-1650814">
    <property type="pathway name" value="Collagen biosynthesis and modifying enzymes"/>
</dbReference>
<dbReference type="Proteomes" id="UP000009136">
    <property type="component" value="Chromosome 7"/>
</dbReference>
<dbReference type="Bgee" id="ENSBTAG00000012678">
    <property type="expression patterns" value="Expressed in granulosa cell and 103 other cell types or tissues"/>
</dbReference>
<dbReference type="GO" id="GO:0005788">
    <property type="term" value="C:endoplasmic reticulum lumen"/>
    <property type="evidence" value="ECO:0000250"/>
    <property type="project" value="UniProtKB"/>
</dbReference>
<dbReference type="GO" id="GO:0050211">
    <property type="term" value="F:procollagen galactosyltransferase activity"/>
    <property type="evidence" value="ECO:0000250"/>
    <property type="project" value="UniProtKB"/>
</dbReference>
<dbReference type="GO" id="GO:1904028">
    <property type="term" value="P:positive regulation of collagen fibril organization"/>
    <property type="evidence" value="ECO:0000250"/>
    <property type="project" value="UniProtKB"/>
</dbReference>
<dbReference type="CDD" id="cd00761">
    <property type="entry name" value="Glyco_tranf_GTA_type"/>
    <property type="match status" value="1"/>
</dbReference>
<dbReference type="CDD" id="cd06532">
    <property type="entry name" value="Glyco_transf_25"/>
    <property type="match status" value="1"/>
</dbReference>
<dbReference type="FunFam" id="3.90.550.10:FF:000048">
    <property type="entry name" value="Glycosyltransferase 25 family member 1"/>
    <property type="match status" value="1"/>
</dbReference>
<dbReference type="Gene3D" id="3.90.550.10">
    <property type="entry name" value="Spore Coat Polysaccharide Biosynthesis Protein SpsA, Chain A"/>
    <property type="match status" value="1"/>
</dbReference>
<dbReference type="InterPro" id="IPR050757">
    <property type="entry name" value="Collagen_mod_GT25"/>
</dbReference>
<dbReference type="InterPro" id="IPR002654">
    <property type="entry name" value="Glyco_trans_25"/>
</dbReference>
<dbReference type="InterPro" id="IPR029044">
    <property type="entry name" value="Nucleotide-diphossugar_trans"/>
</dbReference>
<dbReference type="PANTHER" id="PTHR10730:SF28">
    <property type="entry name" value="PROCOLLAGEN GALACTOSYLTRANSFERASE 1"/>
    <property type="match status" value="1"/>
</dbReference>
<dbReference type="PANTHER" id="PTHR10730">
    <property type="entry name" value="PROCOLLAGEN-LYSINE,2-OXOGLUTARATE 5-DIOXYGENASE/GLYCOSYLTRANSFERASE 25 FAMILY MEMBER"/>
    <property type="match status" value="1"/>
</dbReference>
<dbReference type="Pfam" id="PF13704">
    <property type="entry name" value="Glyco_tranf_2_4"/>
    <property type="match status" value="1"/>
</dbReference>
<dbReference type="Pfam" id="PF01755">
    <property type="entry name" value="Glyco_transf_25"/>
    <property type="match status" value="1"/>
</dbReference>
<dbReference type="SUPFAM" id="SSF53448">
    <property type="entry name" value="Nucleotide-diphospho-sugar transferases"/>
    <property type="match status" value="1"/>
</dbReference>
<dbReference type="PROSITE" id="PS00014">
    <property type="entry name" value="ER_TARGET"/>
    <property type="match status" value="1"/>
</dbReference>
<protein>
    <recommendedName>
        <fullName>Procollagen galactosyltransferase 1</fullName>
        <ecNumber evidence="1">2.4.1.50</ecNumber>
    </recommendedName>
    <alternativeName>
        <fullName>Collagen beta(1-O)galactosyltransferase 1</fullName>
    </alternativeName>
    <alternativeName>
        <fullName>Glycosyltransferase 25 family member 1</fullName>
    </alternativeName>
    <alternativeName>
        <fullName>Hydroxylysine galactosyltransferase 1</fullName>
    </alternativeName>
</protein>
<comment type="function">
    <text evidence="1">Beta-galactosyltransferase that transfers beta-galactose to hydroxylysine residues of type I collagen. By acting on collagen glycosylation, facilitates the formation of collagen triple helix. Also involved in the biosynthesis of collagen type IV.</text>
</comment>
<comment type="catalytic activity">
    <reaction evidence="1">
        <text>(5R)-5-hydroxy-L-lysyl-[collagen] + UDP-alpha-D-galactose = (5R)-5-O-(beta-D-galactosyl)-5-hydroxy-L-lysyl-[collagen] + UDP + H(+)</text>
        <dbReference type="Rhea" id="RHEA:12637"/>
        <dbReference type="Rhea" id="RHEA-COMP:12752"/>
        <dbReference type="Rhea" id="RHEA-COMP:12753"/>
        <dbReference type="ChEBI" id="CHEBI:15378"/>
        <dbReference type="ChEBI" id="CHEBI:58223"/>
        <dbReference type="ChEBI" id="CHEBI:66914"/>
        <dbReference type="ChEBI" id="CHEBI:133442"/>
        <dbReference type="ChEBI" id="CHEBI:133443"/>
        <dbReference type="EC" id="2.4.1.50"/>
    </reaction>
</comment>
<comment type="subcellular location">
    <subcellularLocation>
        <location evidence="3">Endoplasmic reticulum lumen</location>
    </subcellularLocation>
    <text evidence="1">Colocalized with PLOD3 and mannose binding lectin.</text>
</comment>
<comment type="PTM">
    <text evidence="1">N-glycosylated.</text>
</comment>
<comment type="similarity">
    <text evidence="5">Belongs to the glycosyltransferase 25 family.</text>
</comment>
<evidence type="ECO:0000250" key="1">
    <source>
        <dbReference type="UniProtKB" id="Q8NBJ5"/>
    </source>
</evidence>
<evidence type="ECO:0000255" key="2"/>
<evidence type="ECO:0000255" key="3">
    <source>
        <dbReference type="PROSITE-ProRule" id="PRU10138"/>
    </source>
</evidence>
<evidence type="ECO:0000256" key="4">
    <source>
        <dbReference type="SAM" id="MobiDB-lite"/>
    </source>
</evidence>
<evidence type="ECO:0000305" key="5"/>
<proteinExistence type="evidence at transcript level"/>